<evidence type="ECO:0000269" key="1">
    <source>
    </source>
</evidence>
<evidence type="ECO:0000269" key="2">
    <source>
    </source>
</evidence>
<evidence type="ECO:0000305" key="3"/>
<evidence type="ECO:0007829" key="4">
    <source>
        <dbReference type="PDB" id="1IR6"/>
    </source>
</evidence>
<evidence type="ECO:0007829" key="5">
    <source>
        <dbReference type="PDB" id="2ZXO"/>
    </source>
</evidence>
<evidence type="ECO:0007829" key="6">
    <source>
        <dbReference type="PDB" id="2ZXP"/>
    </source>
</evidence>
<evidence type="ECO:0007829" key="7">
    <source>
        <dbReference type="PDB" id="2ZXR"/>
    </source>
</evidence>
<gene>
    <name type="primary">recJ</name>
    <name type="ordered locus">TTHA1167</name>
</gene>
<comment type="function">
    <text evidence="2">Single-stranded-DNA-specific exonuclease acting in a 5' to 3' direction; has no detectable activity on ssRNA.</text>
</comment>
<comment type="cofactor">
    <cofactor evidence="2">
        <name>Mg(2+)</name>
        <dbReference type="ChEBI" id="CHEBI:18420"/>
    </cofactor>
    <cofactor evidence="2">
        <name>Mn(2+)</name>
        <dbReference type="ChEBI" id="CHEBI:29035"/>
    </cofactor>
    <cofactor evidence="2">
        <name>Co(2+)</name>
        <dbReference type="ChEBI" id="CHEBI:48828"/>
    </cofactor>
    <text evidence="2">Requires a divalent cation; Mg(2+) &gt; Mn(2+) &gt; Co(2+). Structures with 1 Mg(2+), or 1 or 2 Mn(2+) were determined; the authors conclude 2 metal ions are required for activity.</text>
</comment>
<comment type="biophysicochemical properties">
    <kinetics>
        <KM evidence="2">0.17 uM for ssDNA 6-mers</KM>
        <KM evidence="2">0.084 uM for ssDNA 11-mers</KM>
        <KM evidence="2">0.037 uM for ssDNA 21-mers</KM>
        <text>kcat for ssDNA remains unchanged as chain length increases from 6-mers to 21-mers.</text>
    </kinetics>
</comment>
<comment type="subunit">
    <text evidence="1 2">Monomer. Intact protein binds ss- but not dsDNA.</text>
</comment>
<comment type="similarity">
    <text evidence="3">Belongs to the RecJ family.</text>
</comment>
<sequence length="666" mass="72865">MRDRVRWRVLSLPPLAQWREVMAALEVGPEAALAYWHRGFRRKEDLDPPLALLPLKGLREAAALLEEALRQGKRIRVHGDYDADGLTGTAILVRGLAALGADVHPFIPHRLEEGYGVLMERVPEHLEASDLFLTVDCGITNHAELRELLENGVEVIVTDHHTPGKTPPPGLVVHPALTPDLKEKPTGAGVAFLLLWALHERLGLPPPLEYADLAAVGTIADVAPLWGWNRALVKEGLARIPASSWVGLRLLAEAVGYTGKAVEVAFRIAPRINAASRLGEAEKALRLLLTDDAAEAQALVGELHRLNARRQTLEEAMLRKLLPQADPEAKAIVLLDPEGHPGVMGIVASRILEATLRPVFLVAQGKGTVRSLAPISAVEALRSAEDLLLRYGGHKEAAGFAMDEALFPAFKARVEAYAARFPDPVREVALLDLLPEPGLLPQVFRELALLEPYGEGNPEPLFLLFGAPEEARRLGEGRHLAFRLKGVRVLAWKQGDLALPPEVEVAGLLSENAWNGHLAYEVQAVDLRKPEALEGGIAPFAYPLPLLEALARARLGEGVYVPEDNPEGLDYAWKAGFRLLPPEEAGLWLGLPPRPVLGRRVEVALGREARARLSAPPVLHTPEARLKALVHRRLLFAYERRHPGLFSEALLAYWEVNRVQEPAGSP</sequence>
<accession>Q5SJ47</accession>
<protein>
    <recommendedName>
        <fullName>Single-stranded-DNA-specific exonuclease RecJ</fullName>
        <ecNumber>3.1.-.-</ecNumber>
    </recommendedName>
</protein>
<dbReference type="EC" id="3.1.-.-"/>
<dbReference type="EMBL" id="AP008226">
    <property type="protein sequence ID" value="BAD70990.1"/>
    <property type="molecule type" value="Genomic_DNA"/>
</dbReference>
<dbReference type="RefSeq" id="WP_011228485.1">
    <property type="nucleotide sequence ID" value="NC_006461.1"/>
</dbReference>
<dbReference type="RefSeq" id="YP_144433.1">
    <property type="nucleotide sequence ID" value="NC_006461.1"/>
</dbReference>
<dbReference type="PDB" id="1IR6">
    <property type="method" value="X-ray"/>
    <property type="resolution" value="2.90 A"/>
    <property type="chains" value="A=40-463"/>
</dbReference>
<dbReference type="PDB" id="2ZXO">
    <property type="method" value="X-ray"/>
    <property type="resolution" value="2.50 A"/>
    <property type="chains" value="A=1-666"/>
</dbReference>
<dbReference type="PDB" id="2ZXP">
    <property type="method" value="X-ray"/>
    <property type="resolution" value="2.30 A"/>
    <property type="chains" value="A=1-666"/>
</dbReference>
<dbReference type="PDB" id="2ZXR">
    <property type="method" value="X-ray"/>
    <property type="resolution" value="2.15 A"/>
    <property type="chains" value="A=1-666"/>
</dbReference>
<dbReference type="PDBsum" id="1IR6"/>
<dbReference type="PDBsum" id="2ZXO"/>
<dbReference type="PDBsum" id="2ZXP"/>
<dbReference type="PDBsum" id="2ZXR"/>
<dbReference type="SMR" id="Q5SJ47"/>
<dbReference type="EnsemblBacteria" id="BAD70990">
    <property type="protein sequence ID" value="BAD70990"/>
    <property type="gene ID" value="BAD70990"/>
</dbReference>
<dbReference type="GeneID" id="3168814"/>
<dbReference type="KEGG" id="ttj:TTHA1167"/>
<dbReference type="PATRIC" id="fig|300852.9.peg.1147"/>
<dbReference type="eggNOG" id="COG0608">
    <property type="taxonomic scope" value="Bacteria"/>
</dbReference>
<dbReference type="HOGENOM" id="CLU_009736_5_2_0"/>
<dbReference type="PhylomeDB" id="Q5SJ47"/>
<dbReference type="SABIO-RK" id="Q5SJ47"/>
<dbReference type="EvolutionaryTrace" id="Q5SJ47"/>
<dbReference type="Proteomes" id="UP000000532">
    <property type="component" value="Chromosome"/>
</dbReference>
<dbReference type="GO" id="GO:0003677">
    <property type="term" value="F:DNA binding"/>
    <property type="evidence" value="ECO:0007669"/>
    <property type="project" value="UniProtKB-KW"/>
</dbReference>
<dbReference type="GO" id="GO:0004527">
    <property type="term" value="F:exonuclease activity"/>
    <property type="evidence" value="ECO:0007669"/>
    <property type="project" value="UniProtKB-KW"/>
</dbReference>
<dbReference type="GO" id="GO:0046872">
    <property type="term" value="F:metal ion binding"/>
    <property type="evidence" value="ECO:0007669"/>
    <property type="project" value="UniProtKB-KW"/>
</dbReference>
<dbReference type="Gene3D" id="3.10.310.30">
    <property type="match status" value="1"/>
</dbReference>
<dbReference type="Gene3D" id="3.40.50.12810">
    <property type="match status" value="1"/>
</dbReference>
<dbReference type="Gene3D" id="3.90.1640.30">
    <property type="match status" value="1"/>
</dbReference>
<dbReference type="InterPro" id="IPR001667">
    <property type="entry name" value="DDH_dom"/>
</dbReference>
<dbReference type="InterPro" id="IPR038763">
    <property type="entry name" value="DHH_sf"/>
</dbReference>
<dbReference type="InterPro" id="IPR003156">
    <property type="entry name" value="DHHA1_dom"/>
</dbReference>
<dbReference type="InterPro" id="IPR054598">
    <property type="entry name" value="RecJ_C_thermales"/>
</dbReference>
<dbReference type="InterPro" id="IPR041122">
    <property type="entry name" value="RecJ_OB"/>
</dbReference>
<dbReference type="InterPro" id="IPR051673">
    <property type="entry name" value="SSDNA_exonuclease_RecJ"/>
</dbReference>
<dbReference type="PANTHER" id="PTHR30255">
    <property type="entry name" value="SINGLE-STRANDED-DNA-SPECIFIC EXONUCLEASE RECJ"/>
    <property type="match status" value="1"/>
</dbReference>
<dbReference type="PANTHER" id="PTHR30255:SF2">
    <property type="entry name" value="SINGLE-STRANDED-DNA-SPECIFIC EXONUCLEASE RECJ"/>
    <property type="match status" value="1"/>
</dbReference>
<dbReference type="Pfam" id="PF01368">
    <property type="entry name" value="DHH"/>
    <property type="match status" value="1"/>
</dbReference>
<dbReference type="Pfam" id="PF02272">
    <property type="entry name" value="DHHA1"/>
    <property type="match status" value="1"/>
</dbReference>
<dbReference type="Pfam" id="PF22047">
    <property type="entry name" value="RecJ_C"/>
    <property type="match status" value="1"/>
</dbReference>
<dbReference type="Pfam" id="PF17768">
    <property type="entry name" value="RecJ_OB"/>
    <property type="match status" value="1"/>
</dbReference>
<dbReference type="SUPFAM" id="SSF64182">
    <property type="entry name" value="DHH phosphoesterases"/>
    <property type="match status" value="1"/>
</dbReference>
<proteinExistence type="evidence at protein level"/>
<keyword id="KW-0002">3D-structure</keyword>
<keyword id="KW-0238">DNA-binding</keyword>
<keyword id="KW-0269">Exonuclease</keyword>
<keyword id="KW-0378">Hydrolase</keyword>
<keyword id="KW-0464">Manganese</keyword>
<keyword id="KW-0479">Metal-binding</keyword>
<keyword id="KW-0540">Nuclease</keyword>
<keyword id="KW-1185">Reference proteome</keyword>
<reference key="1">
    <citation type="submission" date="2004-11" db="EMBL/GenBank/DDBJ databases">
        <title>Complete genome sequence of Thermus thermophilus HB8.</title>
        <authorList>
            <person name="Masui R."/>
            <person name="Kurokawa K."/>
            <person name="Nakagawa N."/>
            <person name="Tokunaga F."/>
            <person name="Koyama Y."/>
            <person name="Shibata T."/>
            <person name="Oshima T."/>
            <person name="Yokoyama S."/>
            <person name="Yasunaga T."/>
            <person name="Kuramitsu S."/>
        </authorList>
    </citation>
    <scope>NUCLEOTIDE SEQUENCE [LARGE SCALE GENOMIC DNA]</scope>
    <source>
        <strain>ATCC 27634 / DSM 579 / HB8</strain>
    </source>
</reference>
<reference key="2">
    <citation type="journal article" date="2011" name="J. Biol. Chem.">
        <title>Role of RecJ-like protein with 5'-3' exonuclease activity in oligo(deoxy)nucleotide degradation.</title>
        <authorList>
            <person name="Wakamatsu T."/>
            <person name="Kim K."/>
            <person name="Uemura Y."/>
            <person name="Nakagawa N."/>
            <person name="Kuramitsu S."/>
            <person name="Masui R."/>
        </authorList>
    </citation>
    <scope>FUNCTION AS AN EXONUCLEASE</scope>
    <scope>BIOPHYSICOCHEMICAL PROPERTIES</scope>
    <scope>SUBUNIT</scope>
    <scope>COFACTOR</scope>
    <source>
        <strain>ATCC 27634 / DSM 579 / HB8</strain>
    </source>
</reference>
<reference key="3">
    <citation type="journal article" date="2010" name="J. Biol. Chem.">
        <title>Structure of RecJ exonuclease defines its specificity for single-stranded DNA.</title>
        <authorList>
            <person name="Wakamatsu T."/>
            <person name="Kitamura Y."/>
            <person name="Kotera Y."/>
            <person name="Nakagawa N."/>
            <person name="Kuramitsu S."/>
            <person name="Masui R."/>
        </authorList>
    </citation>
    <scope>X-RAY CRYSTALLOGRAPHY (2.15 ANGSTROMS) IN COMPLEX WITH MANGANESE</scope>
    <scope>DNA-BINDING</scope>
</reference>
<organism>
    <name type="scientific">Thermus thermophilus (strain ATCC 27634 / DSM 579 / HB8)</name>
    <dbReference type="NCBI Taxonomy" id="300852"/>
    <lineage>
        <taxon>Bacteria</taxon>
        <taxon>Thermotogati</taxon>
        <taxon>Deinococcota</taxon>
        <taxon>Deinococci</taxon>
        <taxon>Thermales</taxon>
        <taxon>Thermaceae</taxon>
        <taxon>Thermus</taxon>
    </lineage>
</organism>
<name>RECJ_THET8</name>
<feature type="chain" id="PRO_0000419756" description="Single-stranded-DNA-specific exonuclease RecJ">
    <location>
        <begin position="1"/>
        <end position="666"/>
    </location>
</feature>
<feature type="binding site" evidence="1">
    <location>
        <position position="80"/>
    </location>
    <ligand>
        <name>Mn(2+)</name>
        <dbReference type="ChEBI" id="CHEBI:29035"/>
        <label>1</label>
    </ligand>
</feature>
<feature type="binding site" evidence="1">
    <location>
        <position position="82"/>
    </location>
    <ligand>
        <name>Mn(2+)</name>
        <dbReference type="ChEBI" id="CHEBI:29035"/>
        <label>1</label>
    </ligand>
</feature>
<feature type="binding site" evidence="1">
    <location>
        <position position="84"/>
    </location>
    <ligand>
        <name>Mn(2+)</name>
        <dbReference type="ChEBI" id="CHEBI:29035"/>
        <label>2</label>
    </ligand>
</feature>
<feature type="binding site" evidence="1">
    <location>
        <position position="136"/>
    </location>
    <ligand>
        <name>Mn(2+)</name>
        <dbReference type="ChEBI" id="CHEBI:29035"/>
        <label>1</label>
    </ligand>
</feature>
<feature type="binding site" evidence="1">
    <location>
        <position position="136"/>
    </location>
    <ligand>
        <name>Mn(2+)</name>
        <dbReference type="ChEBI" id="CHEBI:29035"/>
        <label>2</label>
    </ligand>
</feature>
<feature type="binding site" evidence="1">
    <location>
        <position position="160"/>
    </location>
    <ligand>
        <name>Mn(2+)</name>
        <dbReference type="ChEBI" id="CHEBI:29035"/>
        <label>2</label>
    </ligand>
</feature>
<feature type="binding site" evidence="1">
    <location>
        <position position="221"/>
    </location>
    <ligand>
        <name>Mn(2+)</name>
        <dbReference type="ChEBI" id="CHEBI:29035"/>
        <label>2</label>
    </ligand>
</feature>
<feature type="strand" evidence="7">
    <location>
        <begin position="5"/>
        <end position="9"/>
    </location>
</feature>
<feature type="helix" evidence="7">
    <location>
        <begin position="15"/>
        <end position="25"/>
    </location>
</feature>
<feature type="helix" evidence="7">
    <location>
        <begin position="29"/>
        <end position="37"/>
    </location>
</feature>
<feature type="helix" evidence="7">
    <location>
        <begin position="43"/>
        <end position="45"/>
    </location>
</feature>
<feature type="helix" evidence="7">
    <location>
        <begin position="58"/>
        <end position="70"/>
    </location>
</feature>
<feature type="strand" evidence="7">
    <location>
        <begin position="74"/>
        <end position="78"/>
    </location>
</feature>
<feature type="helix" evidence="7">
    <location>
        <begin position="83"/>
        <end position="98"/>
    </location>
</feature>
<feature type="strand" evidence="7">
    <location>
        <begin position="102"/>
        <end position="105"/>
    </location>
</feature>
<feature type="turn" evidence="4">
    <location>
        <begin position="110"/>
        <end position="112"/>
    </location>
</feature>
<feature type="helix" evidence="4">
    <location>
        <begin position="119"/>
        <end position="121"/>
    </location>
</feature>
<feature type="helix" evidence="6">
    <location>
        <begin position="122"/>
        <end position="128"/>
    </location>
</feature>
<feature type="strand" evidence="7">
    <location>
        <begin position="131"/>
        <end position="135"/>
    </location>
</feature>
<feature type="helix" evidence="6">
    <location>
        <begin position="143"/>
        <end position="145"/>
    </location>
</feature>
<feature type="helix" evidence="6">
    <location>
        <begin position="146"/>
        <end position="149"/>
    </location>
</feature>
<feature type="strand" evidence="7">
    <location>
        <begin position="154"/>
        <end position="158"/>
    </location>
</feature>
<feature type="strand" evidence="6">
    <location>
        <begin position="169"/>
        <end position="173"/>
    </location>
</feature>
<feature type="helix" evidence="7">
    <location>
        <begin position="175"/>
        <end position="177"/>
    </location>
</feature>
<feature type="strand" evidence="6">
    <location>
        <begin position="178"/>
        <end position="180"/>
    </location>
</feature>
<feature type="helix" evidence="7">
    <location>
        <begin position="187"/>
        <end position="201"/>
    </location>
</feature>
<feature type="helix" evidence="7">
    <location>
        <begin position="208"/>
        <end position="210"/>
    </location>
</feature>
<feature type="helix" evidence="7">
    <location>
        <begin position="211"/>
        <end position="220"/>
    </location>
</feature>
<feature type="helix" evidence="7">
    <location>
        <begin position="227"/>
        <end position="239"/>
    </location>
</feature>
<feature type="helix" evidence="7">
    <location>
        <begin position="240"/>
        <end position="242"/>
    </location>
</feature>
<feature type="helix" evidence="7">
    <location>
        <begin position="246"/>
        <end position="254"/>
    </location>
</feature>
<feature type="helix" evidence="7">
    <location>
        <begin position="261"/>
        <end position="266"/>
    </location>
</feature>
<feature type="helix" evidence="7">
    <location>
        <begin position="268"/>
        <end position="277"/>
    </location>
</feature>
<feature type="helix" evidence="7">
    <location>
        <begin position="281"/>
        <end position="289"/>
    </location>
</feature>
<feature type="helix" evidence="7">
    <location>
        <begin position="293"/>
        <end position="321"/>
    </location>
</feature>
<feature type="helix" evidence="4">
    <location>
        <begin position="322"/>
        <end position="324"/>
    </location>
</feature>
<feature type="strand" evidence="7">
    <location>
        <begin position="330"/>
        <end position="335"/>
    </location>
</feature>
<feature type="helix" evidence="7">
    <location>
        <begin position="341"/>
        <end position="355"/>
    </location>
</feature>
<feature type="strand" evidence="7">
    <location>
        <begin position="359"/>
        <end position="363"/>
    </location>
</feature>
<feature type="strand" evidence="7">
    <location>
        <begin position="366"/>
        <end position="370"/>
    </location>
</feature>
<feature type="helix" evidence="7">
    <location>
        <begin position="377"/>
        <end position="383"/>
    </location>
</feature>
<feature type="helix" evidence="7">
    <location>
        <begin position="384"/>
        <end position="387"/>
    </location>
</feature>
<feature type="strand" evidence="7">
    <location>
        <begin position="389"/>
        <end position="393"/>
    </location>
</feature>
<feature type="strand" evidence="7">
    <location>
        <begin position="395"/>
        <end position="401"/>
    </location>
</feature>
<feature type="helix" evidence="7">
    <location>
        <begin position="404"/>
        <end position="406"/>
    </location>
</feature>
<feature type="helix" evidence="7">
    <location>
        <begin position="407"/>
        <end position="419"/>
    </location>
</feature>
<feature type="strand" evidence="7">
    <location>
        <begin position="426"/>
        <end position="430"/>
    </location>
</feature>
<feature type="helix" evidence="7">
    <location>
        <begin position="437"/>
        <end position="439"/>
    </location>
</feature>
<feature type="helix" evidence="7">
    <location>
        <begin position="440"/>
        <end position="447"/>
    </location>
</feature>
<feature type="helix" evidence="7">
    <location>
        <begin position="448"/>
        <end position="450"/>
    </location>
</feature>
<feature type="strand" evidence="7">
    <location>
        <begin position="454"/>
        <end position="457"/>
    </location>
</feature>
<feature type="strand" evidence="7">
    <location>
        <begin position="462"/>
        <end position="466"/>
    </location>
</feature>
<feature type="strand" evidence="7">
    <location>
        <begin position="469"/>
        <end position="484"/>
    </location>
</feature>
<feature type="strand" evidence="7">
    <location>
        <begin position="487"/>
        <end position="492"/>
    </location>
</feature>
<feature type="strand" evidence="6">
    <location>
        <begin position="494"/>
        <end position="496"/>
    </location>
</feature>
<feature type="strand" evidence="7">
    <location>
        <begin position="501"/>
        <end position="514"/>
    </location>
</feature>
<feature type="strand" evidence="7">
    <location>
        <begin position="517"/>
        <end position="529"/>
    </location>
</feature>
<feature type="strand" evidence="7">
    <location>
        <begin position="541"/>
        <end position="543"/>
    </location>
</feature>
<feature type="helix" evidence="7">
    <location>
        <begin position="546"/>
        <end position="554"/>
    </location>
</feature>
<feature type="strand" evidence="7">
    <location>
        <begin position="558"/>
        <end position="560"/>
    </location>
</feature>
<feature type="strand" evidence="7">
    <location>
        <begin position="563"/>
        <end position="565"/>
    </location>
</feature>
<feature type="helix" evidence="7">
    <location>
        <begin position="566"/>
        <end position="573"/>
    </location>
</feature>
<feature type="turn" evidence="7">
    <location>
        <begin position="574"/>
        <end position="576"/>
    </location>
</feature>
<feature type="turn" evidence="7">
    <location>
        <begin position="582"/>
        <end position="584"/>
    </location>
</feature>
<feature type="strand" evidence="7">
    <location>
        <begin position="586"/>
        <end position="590"/>
    </location>
</feature>
<feature type="strand" evidence="7">
    <location>
        <begin position="601"/>
        <end position="603"/>
    </location>
</feature>
<feature type="turn" evidence="6">
    <location>
        <begin position="611"/>
        <end position="614"/>
    </location>
</feature>
<feature type="turn" evidence="5">
    <location>
        <begin position="621"/>
        <end position="623"/>
    </location>
</feature>
<feature type="helix" evidence="7">
    <location>
        <begin position="624"/>
        <end position="639"/>
    </location>
</feature>
<feature type="helix" evidence="7">
    <location>
        <begin position="643"/>
        <end position="655"/>
    </location>
</feature>